<accession>C6DGY2</accession>
<organism>
    <name type="scientific">Pectobacterium carotovorum subsp. carotovorum (strain PC1)</name>
    <dbReference type="NCBI Taxonomy" id="561230"/>
    <lineage>
        <taxon>Bacteria</taxon>
        <taxon>Pseudomonadati</taxon>
        <taxon>Pseudomonadota</taxon>
        <taxon>Gammaproteobacteria</taxon>
        <taxon>Enterobacterales</taxon>
        <taxon>Pectobacteriaceae</taxon>
        <taxon>Pectobacterium</taxon>
    </lineage>
</organism>
<protein>
    <recommendedName>
        <fullName evidence="1">Putative double-stranded DNA mimic protein PC1_1990</fullName>
    </recommendedName>
</protein>
<feature type="chain" id="PRO_1000212537" description="Putative double-stranded DNA mimic protein PC1_1990">
    <location>
        <begin position="1"/>
        <end position="107"/>
    </location>
</feature>
<comment type="function">
    <text evidence="1">May act as a double-stranded DNA (dsDNA) mimic. Probably regulates the activity of a dsDNA-binding protein.</text>
</comment>
<comment type="similarity">
    <text evidence="1">Belongs to the putative dsDNA mimic protein family.</text>
</comment>
<dbReference type="EMBL" id="CP001657">
    <property type="protein sequence ID" value="ACT13031.1"/>
    <property type="molecule type" value="Genomic_DNA"/>
</dbReference>
<dbReference type="RefSeq" id="WP_015840224.1">
    <property type="nucleotide sequence ID" value="NC_012917.1"/>
</dbReference>
<dbReference type="SMR" id="C6DGY2"/>
<dbReference type="STRING" id="561230.PC1_1990"/>
<dbReference type="KEGG" id="pct:PC1_1990"/>
<dbReference type="eggNOG" id="COG3099">
    <property type="taxonomic scope" value="Bacteria"/>
</dbReference>
<dbReference type="HOGENOM" id="CLU_143392_0_0_6"/>
<dbReference type="OrthoDB" id="5677388at2"/>
<dbReference type="Proteomes" id="UP000002736">
    <property type="component" value="Chromosome"/>
</dbReference>
<dbReference type="Gene3D" id="3.10.450.140">
    <property type="entry name" value="dsDNA mimic, putative"/>
    <property type="match status" value="1"/>
</dbReference>
<dbReference type="HAMAP" id="MF_00680">
    <property type="entry name" value="Put_dsDNA_mimic"/>
    <property type="match status" value="1"/>
</dbReference>
<dbReference type="InterPro" id="IPR007376">
    <property type="entry name" value="dsDNA_mimic_put"/>
</dbReference>
<dbReference type="InterPro" id="IPR036763">
    <property type="entry name" value="Put_dsDNA_mimic_sf"/>
</dbReference>
<dbReference type="NCBIfam" id="NF003469">
    <property type="entry name" value="PRK05094.1"/>
    <property type="match status" value="1"/>
</dbReference>
<dbReference type="Pfam" id="PF04269">
    <property type="entry name" value="DUF440"/>
    <property type="match status" value="1"/>
</dbReference>
<dbReference type="PIRSF" id="PIRSF004916">
    <property type="entry name" value="UCP004916"/>
    <property type="match status" value="1"/>
</dbReference>
<dbReference type="SUPFAM" id="SSF102816">
    <property type="entry name" value="Putative dsDNA mimic"/>
    <property type="match status" value="1"/>
</dbReference>
<proteinExistence type="inferred from homology"/>
<gene>
    <name type="ordered locus">PC1_1990</name>
</gene>
<evidence type="ECO:0000255" key="1">
    <source>
        <dbReference type="HAMAP-Rule" id="MF_00680"/>
    </source>
</evidence>
<sequence>MDLNNRLTEDEALEQAYDIFLELAADNLDPADILLFNLQFEERGGAELFDPAEDWAEHVDFDLNPDFFAEVVIGLAENEGDEITDIFARVLICREKDHKLCHILWKE</sequence>
<name>Y1990_PECCP</name>
<reference key="1">
    <citation type="submission" date="2009-07" db="EMBL/GenBank/DDBJ databases">
        <title>Complete sequence of Pectobacterium carotovorum subsp. carotovorum PC1.</title>
        <authorList>
            <consortium name="US DOE Joint Genome Institute"/>
            <person name="Lucas S."/>
            <person name="Copeland A."/>
            <person name="Lapidus A."/>
            <person name="Glavina del Rio T."/>
            <person name="Tice H."/>
            <person name="Bruce D."/>
            <person name="Goodwin L."/>
            <person name="Pitluck S."/>
            <person name="Munk A.C."/>
            <person name="Brettin T."/>
            <person name="Detter J.C."/>
            <person name="Han C."/>
            <person name="Tapia R."/>
            <person name="Larimer F."/>
            <person name="Land M."/>
            <person name="Hauser L."/>
            <person name="Kyrpides N."/>
            <person name="Mikhailova N."/>
            <person name="Balakrishnan V."/>
            <person name="Glasner J."/>
            <person name="Perna N.T."/>
        </authorList>
    </citation>
    <scope>NUCLEOTIDE SEQUENCE [LARGE SCALE GENOMIC DNA]</scope>
    <source>
        <strain>PC1</strain>
    </source>
</reference>